<evidence type="ECO:0000255" key="1">
    <source>
        <dbReference type="HAMAP-Rule" id="MF_01216"/>
    </source>
</evidence>
<name>AZOR_CLOB8</name>
<proteinExistence type="inferred from homology"/>
<reference key="1">
    <citation type="submission" date="2007-06" db="EMBL/GenBank/DDBJ databases">
        <title>Complete sequence of Clostridium beijerinckii NCIMB 8052.</title>
        <authorList>
            <consortium name="US DOE Joint Genome Institute"/>
            <person name="Copeland A."/>
            <person name="Lucas S."/>
            <person name="Lapidus A."/>
            <person name="Barry K."/>
            <person name="Detter J.C."/>
            <person name="Glavina del Rio T."/>
            <person name="Hammon N."/>
            <person name="Israni S."/>
            <person name="Dalin E."/>
            <person name="Tice H."/>
            <person name="Pitluck S."/>
            <person name="Sims D."/>
            <person name="Brettin T."/>
            <person name="Bruce D."/>
            <person name="Tapia R."/>
            <person name="Brainard J."/>
            <person name="Schmutz J."/>
            <person name="Larimer F."/>
            <person name="Land M."/>
            <person name="Hauser L."/>
            <person name="Kyrpides N."/>
            <person name="Mikhailova N."/>
            <person name="Bennet G."/>
            <person name="Cann I."/>
            <person name="Chen J.-S."/>
            <person name="Contreras A.L."/>
            <person name="Jones D."/>
            <person name="Kashket E."/>
            <person name="Mitchell W."/>
            <person name="Stoddard S."/>
            <person name="Schwarz W."/>
            <person name="Qureshi N."/>
            <person name="Young M."/>
            <person name="Shi Z."/>
            <person name="Ezeji T."/>
            <person name="White B."/>
            <person name="Blaschek H."/>
            <person name="Richardson P."/>
        </authorList>
    </citation>
    <scope>NUCLEOTIDE SEQUENCE [LARGE SCALE GENOMIC DNA]</scope>
    <source>
        <strain>ATCC 51743 / NCIMB 8052</strain>
    </source>
</reference>
<sequence length="198" mass="22344">MNKVLYIKANAKPEGKSRTFKISDVFIDEYKQNNPDDEIITLDLYKEDIDFLRSKDLDTVFGPKNEESKNHPTLKYAYQFAEADKYVIAAPMWNLSIPAILKAYVDYISVVGIAFKYTQEGAVGLLENKKAVYIAARGGSYAETPYELDGIYLRSILGFFGIKDITTISAEKLDVQGENVDKILEEAIDKAKETAKNF</sequence>
<accession>A6LU79</accession>
<gene>
    <name evidence="1" type="primary">azoR</name>
    <name type="ordered locus">Cbei_1737</name>
</gene>
<comment type="function">
    <text evidence="1">Quinone reductase that provides resistance to thiol-specific stress caused by electrophilic quinones.</text>
</comment>
<comment type="function">
    <text evidence="1">Also exhibits azoreductase activity. Catalyzes the reductive cleavage of the azo bond in aromatic azo compounds to the corresponding amines.</text>
</comment>
<comment type="catalytic activity">
    <reaction evidence="1">
        <text>2 a quinone + NADH + H(+) = 2 a 1,4-benzosemiquinone + NAD(+)</text>
        <dbReference type="Rhea" id="RHEA:65952"/>
        <dbReference type="ChEBI" id="CHEBI:15378"/>
        <dbReference type="ChEBI" id="CHEBI:57540"/>
        <dbReference type="ChEBI" id="CHEBI:57945"/>
        <dbReference type="ChEBI" id="CHEBI:132124"/>
        <dbReference type="ChEBI" id="CHEBI:134225"/>
    </reaction>
</comment>
<comment type="catalytic activity">
    <reaction evidence="1">
        <text>N,N-dimethyl-1,4-phenylenediamine + anthranilate + 2 NAD(+) = 2-(4-dimethylaminophenyl)diazenylbenzoate + 2 NADH + 2 H(+)</text>
        <dbReference type="Rhea" id="RHEA:55872"/>
        <dbReference type="ChEBI" id="CHEBI:15378"/>
        <dbReference type="ChEBI" id="CHEBI:15783"/>
        <dbReference type="ChEBI" id="CHEBI:16567"/>
        <dbReference type="ChEBI" id="CHEBI:57540"/>
        <dbReference type="ChEBI" id="CHEBI:57945"/>
        <dbReference type="ChEBI" id="CHEBI:71579"/>
        <dbReference type="EC" id="1.7.1.17"/>
    </reaction>
</comment>
<comment type="cofactor">
    <cofactor evidence="1">
        <name>FMN</name>
        <dbReference type="ChEBI" id="CHEBI:58210"/>
    </cofactor>
    <text evidence="1">Binds 1 FMN per subunit.</text>
</comment>
<comment type="subunit">
    <text evidence="1">Homodimer.</text>
</comment>
<comment type="similarity">
    <text evidence="1">Belongs to the azoreductase type 1 family.</text>
</comment>
<organism>
    <name type="scientific">Clostridium beijerinckii (strain ATCC 51743 / NCIMB 8052)</name>
    <name type="common">Clostridium acetobutylicum</name>
    <dbReference type="NCBI Taxonomy" id="290402"/>
    <lineage>
        <taxon>Bacteria</taxon>
        <taxon>Bacillati</taxon>
        <taxon>Bacillota</taxon>
        <taxon>Clostridia</taxon>
        <taxon>Eubacteriales</taxon>
        <taxon>Clostridiaceae</taxon>
        <taxon>Clostridium</taxon>
    </lineage>
</organism>
<feature type="chain" id="PRO_1000085579" description="FMN-dependent NADH:quinone oxidoreductase">
    <location>
        <begin position="1"/>
        <end position="198"/>
    </location>
</feature>
<feature type="binding site" evidence="1">
    <location>
        <begin position="92"/>
        <end position="95"/>
    </location>
    <ligand>
        <name>FMN</name>
        <dbReference type="ChEBI" id="CHEBI:58210"/>
    </ligand>
</feature>
<protein>
    <recommendedName>
        <fullName evidence="1">FMN-dependent NADH:quinone oxidoreductase</fullName>
        <ecNumber evidence="1">1.6.5.-</ecNumber>
    </recommendedName>
    <alternativeName>
        <fullName evidence="1">Azo-dye reductase</fullName>
    </alternativeName>
    <alternativeName>
        <fullName evidence="1">FMN-dependent NADH-azo compound oxidoreductase</fullName>
    </alternativeName>
    <alternativeName>
        <fullName evidence="1">FMN-dependent NADH-azoreductase</fullName>
        <ecNumber evidence="1">1.7.1.17</ecNumber>
    </alternativeName>
</protein>
<keyword id="KW-0285">Flavoprotein</keyword>
<keyword id="KW-0288">FMN</keyword>
<keyword id="KW-0520">NAD</keyword>
<keyword id="KW-0560">Oxidoreductase</keyword>
<dbReference type="EC" id="1.6.5.-" evidence="1"/>
<dbReference type="EC" id="1.7.1.17" evidence="1"/>
<dbReference type="EMBL" id="CP000721">
    <property type="protein sequence ID" value="ABR33909.1"/>
    <property type="molecule type" value="Genomic_DNA"/>
</dbReference>
<dbReference type="RefSeq" id="WP_011969061.1">
    <property type="nucleotide sequence ID" value="NC_009617.1"/>
</dbReference>
<dbReference type="SMR" id="A6LU79"/>
<dbReference type="KEGG" id="cbe:Cbei_1737"/>
<dbReference type="eggNOG" id="COG1182">
    <property type="taxonomic scope" value="Bacteria"/>
</dbReference>
<dbReference type="HOGENOM" id="CLU_088964_3_1_9"/>
<dbReference type="Proteomes" id="UP000000565">
    <property type="component" value="Chromosome"/>
</dbReference>
<dbReference type="GO" id="GO:0009055">
    <property type="term" value="F:electron transfer activity"/>
    <property type="evidence" value="ECO:0007669"/>
    <property type="project" value="UniProtKB-UniRule"/>
</dbReference>
<dbReference type="GO" id="GO:0010181">
    <property type="term" value="F:FMN binding"/>
    <property type="evidence" value="ECO:0007669"/>
    <property type="project" value="UniProtKB-UniRule"/>
</dbReference>
<dbReference type="GO" id="GO:0016652">
    <property type="term" value="F:oxidoreductase activity, acting on NAD(P)H as acceptor"/>
    <property type="evidence" value="ECO:0007669"/>
    <property type="project" value="UniProtKB-UniRule"/>
</dbReference>
<dbReference type="GO" id="GO:0016655">
    <property type="term" value="F:oxidoreductase activity, acting on NAD(P)H, quinone or similar compound as acceptor"/>
    <property type="evidence" value="ECO:0007669"/>
    <property type="project" value="InterPro"/>
</dbReference>
<dbReference type="Gene3D" id="3.40.50.360">
    <property type="match status" value="1"/>
</dbReference>
<dbReference type="HAMAP" id="MF_01216">
    <property type="entry name" value="Azoreductase_type1"/>
    <property type="match status" value="1"/>
</dbReference>
<dbReference type="InterPro" id="IPR003680">
    <property type="entry name" value="Flavodoxin_fold"/>
</dbReference>
<dbReference type="InterPro" id="IPR029039">
    <property type="entry name" value="Flavoprotein-like_sf"/>
</dbReference>
<dbReference type="InterPro" id="IPR050104">
    <property type="entry name" value="FMN-dep_NADH:Q_OxRdtase_AzoR1"/>
</dbReference>
<dbReference type="InterPro" id="IPR023048">
    <property type="entry name" value="NADH:quinone_OxRdtase_FMN_depd"/>
</dbReference>
<dbReference type="PANTHER" id="PTHR43741">
    <property type="entry name" value="FMN-DEPENDENT NADH-AZOREDUCTASE 1"/>
    <property type="match status" value="1"/>
</dbReference>
<dbReference type="PANTHER" id="PTHR43741:SF7">
    <property type="entry name" value="FMN-DEPENDENT NADH:QUINONE OXIDOREDUCTASE"/>
    <property type="match status" value="1"/>
</dbReference>
<dbReference type="Pfam" id="PF02525">
    <property type="entry name" value="Flavodoxin_2"/>
    <property type="match status" value="1"/>
</dbReference>
<dbReference type="SUPFAM" id="SSF52218">
    <property type="entry name" value="Flavoproteins"/>
    <property type="match status" value="1"/>
</dbReference>